<keyword id="KW-1185">Reference proteome</keyword>
<keyword id="KW-0687">Ribonucleoprotein</keyword>
<keyword id="KW-0689">Ribosomal protein</keyword>
<keyword id="KW-0694">RNA-binding</keyword>
<keyword id="KW-0699">rRNA-binding</keyword>
<organism>
    <name type="scientific">Trichlorobacter lovleyi (strain ATCC BAA-1151 / DSM 17278 / SZ)</name>
    <name type="common">Geobacter lovleyi</name>
    <dbReference type="NCBI Taxonomy" id="398767"/>
    <lineage>
        <taxon>Bacteria</taxon>
        <taxon>Pseudomonadati</taxon>
        <taxon>Thermodesulfobacteriota</taxon>
        <taxon>Desulfuromonadia</taxon>
        <taxon>Geobacterales</taxon>
        <taxon>Geobacteraceae</taxon>
        <taxon>Trichlorobacter</taxon>
    </lineage>
</organism>
<name>RL18_TRIL1</name>
<sequence length="122" mass="13077">MGKTSQKTITRLKRQVRVRKKVTGTAERPRLNVFRSANHIYAQLIDDVQGVTLAAASTCTEGVAQSGVHTGNKASAAAVGAAIARVALQKDIRSVVFDRNGFLYHGRIQALADAAREAGLDF</sequence>
<accession>B3E846</accession>
<proteinExistence type="inferred from homology"/>
<dbReference type="EMBL" id="CP001089">
    <property type="protein sequence ID" value="ACD95083.1"/>
    <property type="molecule type" value="Genomic_DNA"/>
</dbReference>
<dbReference type="RefSeq" id="WP_012469428.1">
    <property type="nucleotide sequence ID" value="NC_010814.1"/>
</dbReference>
<dbReference type="SMR" id="B3E846"/>
<dbReference type="STRING" id="398767.Glov_1362"/>
<dbReference type="KEGG" id="glo:Glov_1362"/>
<dbReference type="eggNOG" id="COG0256">
    <property type="taxonomic scope" value="Bacteria"/>
</dbReference>
<dbReference type="HOGENOM" id="CLU_098841_0_1_7"/>
<dbReference type="OrthoDB" id="9810939at2"/>
<dbReference type="Proteomes" id="UP000002420">
    <property type="component" value="Chromosome"/>
</dbReference>
<dbReference type="GO" id="GO:0022625">
    <property type="term" value="C:cytosolic large ribosomal subunit"/>
    <property type="evidence" value="ECO:0007669"/>
    <property type="project" value="TreeGrafter"/>
</dbReference>
<dbReference type="GO" id="GO:0008097">
    <property type="term" value="F:5S rRNA binding"/>
    <property type="evidence" value="ECO:0007669"/>
    <property type="project" value="TreeGrafter"/>
</dbReference>
<dbReference type="GO" id="GO:0003735">
    <property type="term" value="F:structural constituent of ribosome"/>
    <property type="evidence" value="ECO:0007669"/>
    <property type="project" value="InterPro"/>
</dbReference>
<dbReference type="GO" id="GO:0006412">
    <property type="term" value="P:translation"/>
    <property type="evidence" value="ECO:0007669"/>
    <property type="project" value="UniProtKB-UniRule"/>
</dbReference>
<dbReference type="CDD" id="cd00432">
    <property type="entry name" value="Ribosomal_L18_L5e"/>
    <property type="match status" value="1"/>
</dbReference>
<dbReference type="FunFam" id="3.30.420.100:FF:000001">
    <property type="entry name" value="50S ribosomal protein L18"/>
    <property type="match status" value="1"/>
</dbReference>
<dbReference type="Gene3D" id="3.30.420.100">
    <property type="match status" value="1"/>
</dbReference>
<dbReference type="HAMAP" id="MF_01337_B">
    <property type="entry name" value="Ribosomal_uL18_B"/>
    <property type="match status" value="1"/>
</dbReference>
<dbReference type="InterPro" id="IPR004389">
    <property type="entry name" value="Ribosomal_uL18_bac-type"/>
</dbReference>
<dbReference type="InterPro" id="IPR005484">
    <property type="entry name" value="Ribosomal_uL18_bac/euk"/>
</dbReference>
<dbReference type="NCBIfam" id="TIGR00060">
    <property type="entry name" value="L18_bact"/>
    <property type="match status" value="1"/>
</dbReference>
<dbReference type="PANTHER" id="PTHR12899">
    <property type="entry name" value="39S RIBOSOMAL PROTEIN L18, MITOCHONDRIAL"/>
    <property type="match status" value="1"/>
</dbReference>
<dbReference type="PANTHER" id="PTHR12899:SF3">
    <property type="entry name" value="LARGE RIBOSOMAL SUBUNIT PROTEIN UL18M"/>
    <property type="match status" value="1"/>
</dbReference>
<dbReference type="Pfam" id="PF00861">
    <property type="entry name" value="Ribosomal_L18p"/>
    <property type="match status" value="1"/>
</dbReference>
<dbReference type="SUPFAM" id="SSF53137">
    <property type="entry name" value="Translational machinery components"/>
    <property type="match status" value="1"/>
</dbReference>
<evidence type="ECO:0000255" key="1">
    <source>
        <dbReference type="HAMAP-Rule" id="MF_01337"/>
    </source>
</evidence>
<evidence type="ECO:0000305" key="2"/>
<protein>
    <recommendedName>
        <fullName evidence="1">Large ribosomal subunit protein uL18</fullName>
    </recommendedName>
    <alternativeName>
        <fullName evidence="2">50S ribosomal protein L18</fullName>
    </alternativeName>
</protein>
<feature type="chain" id="PRO_1000142671" description="Large ribosomal subunit protein uL18">
    <location>
        <begin position="1"/>
        <end position="122"/>
    </location>
</feature>
<reference key="1">
    <citation type="submission" date="2008-05" db="EMBL/GenBank/DDBJ databases">
        <title>Complete sequence of chromosome of Geobacter lovleyi SZ.</title>
        <authorList>
            <consortium name="US DOE Joint Genome Institute"/>
            <person name="Lucas S."/>
            <person name="Copeland A."/>
            <person name="Lapidus A."/>
            <person name="Glavina del Rio T."/>
            <person name="Dalin E."/>
            <person name="Tice H."/>
            <person name="Bruce D."/>
            <person name="Goodwin L."/>
            <person name="Pitluck S."/>
            <person name="Chertkov O."/>
            <person name="Meincke L."/>
            <person name="Brettin T."/>
            <person name="Detter J.C."/>
            <person name="Han C."/>
            <person name="Tapia R."/>
            <person name="Kuske C.R."/>
            <person name="Schmutz J."/>
            <person name="Larimer F."/>
            <person name="Land M."/>
            <person name="Hauser L."/>
            <person name="Kyrpides N."/>
            <person name="Mikhailova N."/>
            <person name="Sung Y."/>
            <person name="Fletcher K.E."/>
            <person name="Ritalahti K.M."/>
            <person name="Loeffler F.E."/>
            <person name="Richardson P."/>
        </authorList>
    </citation>
    <scope>NUCLEOTIDE SEQUENCE [LARGE SCALE GENOMIC DNA]</scope>
    <source>
        <strain>ATCC BAA-1151 / DSM 17278 / SZ</strain>
    </source>
</reference>
<gene>
    <name evidence="1" type="primary">rplR</name>
    <name type="ordered locus">Glov_1362</name>
</gene>
<comment type="function">
    <text evidence="1">This is one of the proteins that bind and probably mediate the attachment of the 5S RNA into the large ribosomal subunit, where it forms part of the central protuberance.</text>
</comment>
<comment type="subunit">
    <text evidence="1">Part of the 50S ribosomal subunit; part of the 5S rRNA/L5/L18/L25 subcomplex. Contacts the 5S and 23S rRNAs.</text>
</comment>
<comment type="similarity">
    <text evidence="1">Belongs to the universal ribosomal protein uL18 family.</text>
</comment>